<organism>
    <name type="scientific">Neisseria meningitidis serogroup C / serotype 2a (strain ATCC 700532 / DSM 15464 / FAM18)</name>
    <dbReference type="NCBI Taxonomy" id="272831"/>
    <lineage>
        <taxon>Bacteria</taxon>
        <taxon>Pseudomonadati</taxon>
        <taxon>Pseudomonadota</taxon>
        <taxon>Betaproteobacteria</taxon>
        <taxon>Neisseriales</taxon>
        <taxon>Neisseriaceae</taxon>
        <taxon>Neisseria</taxon>
    </lineage>
</organism>
<feature type="signal peptide" evidence="1">
    <location>
        <begin position="1"/>
        <end position="18"/>
    </location>
</feature>
<feature type="chain" id="PRO_0000344492" description="Adhesin MafA 3">
    <location>
        <begin position="19"/>
        <end position="320"/>
    </location>
</feature>
<feature type="region of interest" description="Disordered" evidence="2">
    <location>
        <begin position="288"/>
        <end position="320"/>
    </location>
</feature>
<feature type="compositionally biased region" description="Polar residues" evidence="2">
    <location>
        <begin position="288"/>
        <end position="298"/>
    </location>
</feature>
<feature type="lipid moiety-binding region" description="N-palmitoyl cysteine" evidence="1">
    <location>
        <position position="19"/>
    </location>
</feature>
<feature type="lipid moiety-binding region" description="S-diacylglycerol cysteine" evidence="1">
    <location>
        <position position="19"/>
    </location>
</feature>
<comment type="subcellular location">
    <subcellularLocation>
        <location evidence="3">Cell outer membrane</location>
        <topology evidence="1">Lipid-anchor</topology>
    </subcellularLocation>
</comment>
<comment type="similarity">
    <text evidence="3">Belongs to the MafA family.</text>
</comment>
<gene>
    <name type="primary">mafA3</name>
    <name type="ordered locus">NMC2083</name>
</gene>
<reference key="1">
    <citation type="journal article" date="2007" name="PLoS Genet.">
        <title>Meningococcal genetic variation mechanisms viewed through comparative analysis of serogroup C strain FAM18.</title>
        <authorList>
            <person name="Bentley S.D."/>
            <person name="Vernikos G.S."/>
            <person name="Snyder L.A.S."/>
            <person name="Churcher C."/>
            <person name="Arrowsmith C."/>
            <person name="Chillingworth T."/>
            <person name="Cronin A."/>
            <person name="Davis P.H."/>
            <person name="Holroyd N.E."/>
            <person name="Jagels K."/>
            <person name="Maddison M."/>
            <person name="Moule S."/>
            <person name="Rabbinowitsch E."/>
            <person name="Sharp S."/>
            <person name="Unwin L."/>
            <person name="Whitehead S."/>
            <person name="Quail M.A."/>
            <person name="Achtman M."/>
            <person name="Barrell B.G."/>
            <person name="Saunders N.J."/>
            <person name="Parkhill J."/>
        </authorList>
    </citation>
    <scope>NUCLEOTIDE SEQUENCE [LARGE SCALE GENOMIC DNA]</scope>
    <source>
        <strain>ATCC 700532 / DSM 15464 / FAM18</strain>
    </source>
</reference>
<accession>A1KWH9</accession>
<name>MAFA3_NEIMF</name>
<sequence length="320" mass="34781">MQARLLIPILFSVFILSACGTLTGIPSHGGGKRFAVEQELVAASARAAVKDMDLQALHGRKVALYIATMGDQGSGSLTGGRYSIDALIRGEYINSPAVRTDYTYPRYETTAETTSGGLTGLTTSLSTLNAPALSRTQSDGSGSKSSLGLNIGGMGDYRNETLTTNPRDTAFLSHLVQTVFFLRGIDVVSPANADTDVFINIDVFGTIRNRTEMHLYNAETLKAQTKLEYFAVDRTNKKLLIKPKTNAFEAAYKENYALWMGPYKVSKGIKPTEGLMVDFSDIRPYGNHTGNSAPSVETDNSHEGYGYSDEVVRQHRQGQP</sequence>
<dbReference type="EMBL" id="AM421808">
    <property type="protein sequence ID" value="CAM11236.1"/>
    <property type="molecule type" value="Genomic_DNA"/>
</dbReference>
<dbReference type="KEGG" id="nmc:NMC2083"/>
<dbReference type="HOGENOM" id="CLU_985210_0_0_4"/>
<dbReference type="Proteomes" id="UP000002286">
    <property type="component" value="Chromosome"/>
</dbReference>
<dbReference type="GO" id="GO:0009279">
    <property type="term" value="C:cell outer membrane"/>
    <property type="evidence" value="ECO:0007669"/>
    <property type="project" value="UniProtKB-SubCell"/>
</dbReference>
<dbReference type="GO" id="GO:0007155">
    <property type="term" value="P:cell adhesion"/>
    <property type="evidence" value="ECO:0007669"/>
    <property type="project" value="UniProtKB-KW"/>
</dbReference>
<dbReference type="PROSITE" id="PS51257">
    <property type="entry name" value="PROKAR_LIPOPROTEIN"/>
    <property type="match status" value="1"/>
</dbReference>
<keyword id="KW-0130">Cell adhesion</keyword>
<keyword id="KW-0998">Cell outer membrane</keyword>
<keyword id="KW-0449">Lipoprotein</keyword>
<keyword id="KW-0472">Membrane</keyword>
<keyword id="KW-0564">Palmitate</keyword>
<keyword id="KW-0732">Signal</keyword>
<keyword id="KW-0843">Virulence</keyword>
<protein>
    <recommendedName>
        <fullName>Adhesin MafA 3</fullName>
    </recommendedName>
</protein>
<evidence type="ECO:0000255" key="1">
    <source>
        <dbReference type="PROSITE-ProRule" id="PRU00303"/>
    </source>
</evidence>
<evidence type="ECO:0000256" key="2">
    <source>
        <dbReference type="SAM" id="MobiDB-lite"/>
    </source>
</evidence>
<evidence type="ECO:0000305" key="3"/>
<proteinExistence type="inferred from homology"/>